<feature type="chain" id="PRO_1000064020" description="2,3-bisphosphoglycerate-independent phosphoglycerate mutase">
    <location>
        <begin position="1"/>
        <end position="515"/>
    </location>
</feature>
<feature type="active site" description="Phosphoserine intermediate" evidence="1">
    <location>
        <position position="64"/>
    </location>
</feature>
<feature type="binding site" evidence="1">
    <location>
        <position position="14"/>
    </location>
    <ligand>
        <name>Mn(2+)</name>
        <dbReference type="ChEBI" id="CHEBI:29035"/>
        <label>2</label>
    </ligand>
</feature>
<feature type="binding site" evidence="1">
    <location>
        <position position="64"/>
    </location>
    <ligand>
        <name>Mn(2+)</name>
        <dbReference type="ChEBI" id="CHEBI:29035"/>
        <label>2</label>
    </ligand>
</feature>
<feature type="binding site" evidence="1">
    <location>
        <position position="125"/>
    </location>
    <ligand>
        <name>substrate</name>
    </ligand>
</feature>
<feature type="binding site" evidence="1">
    <location>
        <begin position="155"/>
        <end position="156"/>
    </location>
    <ligand>
        <name>substrate</name>
    </ligand>
</feature>
<feature type="binding site" evidence="1">
    <location>
        <position position="187"/>
    </location>
    <ligand>
        <name>substrate</name>
    </ligand>
</feature>
<feature type="binding site" evidence="1">
    <location>
        <position position="193"/>
    </location>
    <ligand>
        <name>substrate</name>
    </ligand>
</feature>
<feature type="binding site" evidence="1">
    <location>
        <begin position="263"/>
        <end position="266"/>
    </location>
    <ligand>
        <name>substrate</name>
    </ligand>
</feature>
<feature type="binding site" evidence="1">
    <location>
        <position position="337"/>
    </location>
    <ligand>
        <name>substrate</name>
    </ligand>
</feature>
<feature type="binding site" evidence="1">
    <location>
        <position position="404"/>
    </location>
    <ligand>
        <name>Mn(2+)</name>
        <dbReference type="ChEBI" id="CHEBI:29035"/>
        <label>1</label>
    </ligand>
</feature>
<feature type="binding site" evidence="1">
    <location>
        <position position="408"/>
    </location>
    <ligand>
        <name>Mn(2+)</name>
        <dbReference type="ChEBI" id="CHEBI:29035"/>
        <label>1</label>
    </ligand>
</feature>
<feature type="binding site" evidence="1">
    <location>
        <position position="445"/>
    </location>
    <ligand>
        <name>Mn(2+)</name>
        <dbReference type="ChEBI" id="CHEBI:29035"/>
        <label>2</label>
    </ligand>
</feature>
<feature type="binding site" evidence="1">
    <location>
        <position position="446"/>
    </location>
    <ligand>
        <name>Mn(2+)</name>
        <dbReference type="ChEBI" id="CHEBI:29035"/>
        <label>2</label>
    </ligand>
</feature>
<feature type="binding site" evidence="1">
    <location>
        <position position="464"/>
    </location>
    <ligand>
        <name>Mn(2+)</name>
        <dbReference type="ChEBI" id="CHEBI:29035"/>
        <label>1</label>
    </ligand>
</feature>
<gene>
    <name evidence="1" type="primary">gpmI</name>
    <name type="ordered locus">YPA_3478</name>
</gene>
<organism>
    <name type="scientific">Yersinia pestis bv. Antiqua (strain Antiqua)</name>
    <dbReference type="NCBI Taxonomy" id="360102"/>
    <lineage>
        <taxon>Bacteria</taxon>
        <taxon>Pseudomonadati</taxon>
        <taxon>Pseudomonadota</taxon>
        <taxon>Gammaproteobacteria</taxon>
        <taxon>Enterobacterales</taxon>
        <taxon>Yersiniaceae</taxon>
        <taxon>Yersinia</taxon>
    </lineage>
</organism>
<sequence>MSSTKKPLVLTILDGYGHREEQQDNAILNAKTPVMDVLWQQQPHTLIAASGLDVGLPDGQMGNSEVGHVNLGAGRIVYQDLTRLDKEIKEGDFFTNPTLTAAVDNAVKTGKAVHIMGLLSAGGVHSHEDHIMAMVELAAKRGATAIYLHAFLDGRDTPPRSAESSLKRFTAKFAELGNGRIASIIGRYYAMDRDNRWDRVQLAYDLLTQAKGEFTADNAVAGLQAAYARGENDEFVKPTVIQATGEADAAMNEGDTLIFMNFRADRARQITRTFVNAEFDGFKRDKVVNFGDFIMLTEYAADIKVACAYPPASLTNTFGEWLMKHDKTQLRISETEKYAHVTFFYNGGVEEPFKGEDRILINSPKVATYDLQPEMSSAELTEKLVSAIGSGKYDVIICNYPNGDMVGHTGDYDAAVKAVETLDNCIEQVVAAVKAADGQLLITADHGNAEQMRDPATGQAHTAHTSLPVPLIYVGNKAVKAVEGGKLSDIAPTMLSLMEMEIPQEMTGKPLFIVE</sequence>
<proteinExistence type="inferred from homology"/>
<comment type="function">
    <text evidence="1">Catalyzes the interconversion of 2-phosphoglycerate and 3-phosphoglycerate.</text>
</comment>
<comment type="catalytic activity">
    <reaction evidence="1">
        <text>(2R)-2-phosphoglycerate = (2R)-3-phosphoglycerate</text>
        <dbReference type="Rhea" id="RHEA:15901"/>
        <dbReference type="ChEBI" id="CHEBI:58272"/>
        <dbReference type="ChEBI" id="CHEBI:58289"/>
        <dbReference type="EC" id="5.4.2.12"/>
    </reaction>
</comment>
<comment type="cofactor">
    <cofactor evidence="1">
        <name>Mn(2+)</name>
        <dbReference type="ChEBI" id="CHEBI:29035"/>
    </cofactor>
    <text evidence="1">Binds 2 manganese ions per subunit.</text>
</comment>
<comment type="pathway">
    <text evidence="1">Carbohydrate degradation; glycolysis; pyruvate from D-glyceraldehyde 3-phosphate: step 3/5.</text>
</comment>
<comment type="subunit">
    <text evidence="1">Monomer.</text>
</comment>
<comment type="similarity">
    <text evidence="1">Belongs to the BPG-independent phosphoglycerate mutase family.</text>
</comment>
<name>GPMI_YERPA</name>
<accession>Q1C282</accession>
<reference key="1">
    <citation type="journal article" date="2006" name="J. Bacteriol.">
        <title>Complete genome sequence of Yersinia pestis strains Antiqua and Nepal516: evidence of gene reduction in an emerging pathogen.</title>
        <authorList>
            <person name="Chain P.S.G."/>
            <person name="Hu P."/>
            <person name="Malfatti S.A."/>
            <person name="Radnedge L."/>
            <person name="Larimer F."/>
            <person name="Vergez L.M."/>
            <person name="Worsham P."/>
            <person name="Chu M.C."/>
            <person name="Andersen G.L."/>
        </authorList>
    </citation>
    <scope>NUCLEOTIDE SEQUENCE [LARGE SCALE GENOMIC DNA]</scope>
    <source>
        <strain>Antiqua</strain>
    </source>
</reference>
<dbReference type="EC" id="5.4.2.12" evidence="1"/>
<dbReference type="EMBL" id="CP000308">
    <property type="protein sequence ID" value="ABG15440.1"/>
    <property type="molecule type" value="Genomic_DNA"/>
</dbReference>
<dbReference type="SMR" id="Q1C282"/>
<dbReference type="KEGG" id="ypa:YPA_3478"/>
<dbReference type="UniPathway" id="UPA00109">
    <property type="reaction ID" value="UER00186"/>
</dbReference>
<dbReference type="Proteomes" id="UP000001971">
    <property type="component" value="Chromosome"/>
</dbReference>
<dbReference type="GO" id="GO:0005829">
    <property type="term" value="C:cytosol"/>
    <property type="evidence" value="ECO:0007669"/>
    <property type="project" value="TreeGrafter"/>
</dbReference>
<dbReference type="GO" id="GO:0030145">
    <property type="term" value="F:manganese ion binding"/>
    <property type="evidence" value="ECO:0007669"/>
    <property type="project" value="UniProtKB-UniRule"/>
</dbReference>
<dbReference type="GO" id="GO:0004619">
    <property type="term" value="F:phosphoglycerate mutase activity"/>
    <property type="evidence" value="ECO:0007669"/>
    <property type="project" value="UniProtKB-EC"/>
</dbReference>
<dbReference type="GO" id="GO:0006007">
    <property type="term" value="P:glucose catabolic process"/>
    <property type="evidence" value="ECO:0007669"/>
    <property type="project" value="InterPro"/>
</dbReference>
<dbReference type="GO" id="GO:0006096">
    <property type="term" value="P:glycolytic process"/>
    <property type="evidence" value="ECO:0007669"/>
    <property type="project" value="UniProtKB-UniRule"/>
</dbReference>
<dbReference type="CDD" id="cd16010">
    <property type="entry name" value="iPGM"/>
    <property type="match status" value="1"/>
</dbReference>
<dbReference type="FunFam" id="3.40.1450.10:FF:000001">
    <property type="entry name" value="2,3-bisphosphoglycerate-independent phosphoglycerate mutase"/>
    <property type="match status" value="1"/>
</dbReference>
<dbReference type="FunFam" id="3.40.720.10:FF:000001">
    <property type="entry name" value="2,3-bisphosphoglycerate-independent phosphoglycerate mutase"/>
    <property type="match status" value="1"/>
</dbReference>
<dbReference type="Gene3D" id="3.40.720.10">
    <property type="entry name" value="Alkaline Phosphatase, subunit A"/>
    <property type="match status" value="1"/>
</dbReference>
<dbReference type="Gene3D" id="3.40.1450.10">
    <property type="entry name" value="BPG-independent phosphoglycerate mutase, domain B"/>
    <property type="match status" value="1"/>
</dbReference>
<dbReference type="HAMAP" id="MF_01038">
    <property type="entry name" value="GpmI"/>
    <property type="match status" value="1"/>
</dbReference>
<dbReference type="InterPro" id="IPR017850">
    <property type="entry name" value="Alkaline_phosphatase_core_sf"/>
</dbReference>
<dbReference type="InterPro" id="IPR011258">
    <property type="entry name" value="BPG-indep_PGM_N"/>
</dbReference>
<dbReference type="InterPro" id="IPR006124">
    <property type="entry name" value="Metalloenzyme"/>
</dbReference>
<dbReference type="InterPro" id="IPR036646">
    <property type="entry name" value="PGAM_B_sf"/>
</dbReference>
<dbReference type="InterPro" id="IPR005995">
    <property type="entry name" value="Pgm_bpd_ind"/>
</dbReference>
<dbReference type="NCBIfam" id="TIGR01307">
    <property type="entry name" value="pgm_bpd_ind"/>
    <property type="match status" value="1"/>
</dbReference>
<dbReference type="NCBIfam" id="NF003897">
    <property type="entry name" value="PRK05434.1-5"/>
    <property type="match status" value="1"/>
</dbReference>
<dbReference type="PANTHER" id="PTHR31637">
    <property type="entry name" value="2,3-BISPHOSPHOGLYCERATE-INDEPENDENT PHOSPHOGLYCERATE MUTASE"/>
    <property type="match status" value="1"/>
</dbReference>
<dbReference type="PANTHER" id="PTHR31637:SF0">
    <property type="entry name" value="2,3-BISPHOSPHOGLYCERATE-INDEPENDENT PHOSPHOGLYCERATE MUTASE"/>
    <property type="match status" value="1"/>
</dbReference>
<dbReference type="Pfam" id="PF06415">
    <property type="entry name" value="iPGM_N"/>
    <property type="match status" value="1"/>
</dbReference>
<dbReference type="Pfam" id="PF01676">
    <property type="entry name" value="Metalloenzyme"/>
    <property type="match status" value="1"/>
</dbReference>
<dbReference type="PIRSF" id="PIRSF001492">
    <property type="entry name" value="IPGAM"/>
    <property type="match status" value="1"/>
</dbReference>
<dbReference type="SUPFAM" id="SSF64158">
    <property type="entry name" value="2,3-Bisphosphoglycerate-independent phosphoglycerate mutase, substrate-binding domain"/>
    <property type="match status" value="1"/>
</dbReference>
<dbReference type="SUPFAM" id="SSF53649">
    <property type="entry name" value="Alkaline phosphatase-like"/>
    <property type="match status" value="1"/>
</dbReference>
<protein>
    <recommendedName>
        <fullName evidence="1">2,3-bisphosphoglycerate-independent phosphoglycerate mutase</fullName>
        <shortName evidence="1">BPG-independent PGAM</shortName>
        <shortName evidence="1">Phosphoglyceromutase</shortName>
        <shortName evidence="1">iPGM</shortName>
        <ecNumber evidence="1">5.4.2.12</ecNumber>
    </recommendedName>
</protein>
<keyword id="KW-0324">Glycolysis</keyword>
<keyword id="KW-0413">Isomerase</keyword>
<keyword id="KW-0464">Manganese</keyword>
<keyword id="KW-0479">Metal-binding</keyword>
<evidence type="ECO:0000255" key="1">
    <source>
        <dbReference type="HAMAP-Rule" id="MF_01038"/>
    </source>
</evidence>